<protein>
    <recommendedName>
        <fullName evidence="5">FAD-dependent monooxygenase phomE</fullName>
        <ecNumber evidence="7">1.-.-.-</ecNumber>
    </recommendedName>
    <alternativeName>
        <fullName evidence="5">Phomopsin biosynthesis cluster protein E</fullName>
    </alternativeName>
</protein>
<proteinExistence type="inferred from homology"/>
<sequence>MEIIIVGAGIAGLSAGSGMVALRKGSIIDGTNMQVLIPDYYKDSESKWGLPMYAVHRVDLHTQLRLLATQKEGPGQPCDVQVRSKVVSYDAEGAKVTTENGEVLRADLIIAADGVHSTAVKQVLGDEVVQAGDTGWACMRWLVPSDDFLSDPQTAHMIQDSTTRYFTAAGGAAALVWYPCRNNEVQNFLYLSNFRARVEPSVPLEYAKKHFATALQTVVKKANQVKFWKLVARGPIPKWHKDRLVLIGDAAHPMLTFQGQGGGQAIEDGAALGILLDNVHDRGEIEERLQLFEQIRRNRGSALQILSNTNPPVPQSVRDAAAEYLPGHRLSSTDDVNEYVFSFDVLAESKAALAILQSKERITKSGFL</sequence>
<reference key="1">
    <citation type="journal article" date="2021" name="Angew. Chem. Int. Ed.">
        <title>Biosynthetic studies of phomopsins unveil posttranslational installation of dehydroamino acids by ustYa family proteins.</title>
        <authorList>
            <person name="Sogahata K."/>
            <person name="Ozaki T."/>
            <person name="Igarashi Y."/>
            <person name="Naganuma Y."/>
            <person name="Liu C."/>
            <person name="Minami A."/>
            <person name="Oikawa H."/>
        </authorList>
    </citation>
    <scope>NUCLEOTIDE SEQUENCE [GENOMIC DNA]</scope>
    <scope>FUNCTION</scope>
    <source>
        <strain>ATCC 26115 / IMI 115107 / C 1557</strain>
    </source>
</reference>
<feature type="chain" id="PRO_0000458392" description="FAD-dependent monooxygenase phomE">
    <location>
        <begin position="1"/>
        <end position="368"/>
    </location>
</feature>
<feature type="active site" evidence="3">
    <location>
        <position position="140"/>
    </location>
</feature>
<feature type="active site" evidence="3">
    <location>
        <position position="178"/>
    </location>
</feature>
<feature type="binding site" evidence="3">
    <location>
        <position position="11"/>
    </location>
    <ligand>
        <name>FAD</name>
        <dbReference type="ChEBI" id="CHEBI:57692"/>
    </ligand>
</feature>
<feature type="binding site" evidence="3">
    <location>
        <position position="249"/>
    </location>
    <ligand>
        <name>FAD</name>
        <dbReference type="ChEBI" id="CHEBI:57692"/>
    </ligand>
</feature>
<feature type="binding site" evidence="3">
    <location>
        <position position="262"/>
    </location>
    <ligand>
        <name>FAD</name>
        <dbReference type="ChEBI" id="CHEBI:57692"/>
    </ligand>
</feature>
<dbReference type="EC" id="1.-.-.-" evidence="7"/>
<dbReference type="EMBL" id="LC646903">
    <property type="protein sequence ID" value="BDA39137.1"/>
    <property type="molecule type" value="Genomic_DNA"/>
</dbReference>
<dbReference type="SMR" id="A0A8K1Y6D8"/>
<dbReference type="GO" id="GO:0071949">
    <property type="term" value="F:FAD binding"/>
    <property type="evidence" value="ECO:0007669"/>
    <property type="project" value="InterPro"/>
</dbReference>
<dbReference type="GO" id="GO:0004497">
    <property type="term" value="F:monooxygenase activity"/>
    <property type="evidence" value="ECO:0007669"/>
    <property type="project" value="UniProtKB-KW"/>
</dbReference>
<dbReference type="Gene3D" id="3.50.50.60">
    <property type="entry name" value="FAD/NAD(P)-binding domain"/>
    <property type="match status" value="1"/>
</dbReference>
<dbReference type="InterPro" id="IPR002938">
    <property type="entry name" value="FAD-bd"/>
</dbReference>
<dbReference type="InterPro" id="IPR050493">
    <property type="entry name" value="FAD-dep_Monooxygenase_BioMet"/>
</dbReference>
<dbReference type="InterPro" id="IPR036188">
    <property type="entry name" value="FAD/NAD-bd_sf"/>
</dbReference>
<dbReference type="PANTHER" id="PTHR13789:SF215">
    <property type="entry name" value="FAD-BINDING DOMAIN-CONTAINING PROTEIN-RELATED"/>
    <property type="match status" value="1"/>
</dbReference>
<dbReference type="PANTHER" id="PTHR13789">
    <property type="entry name" value="MONOOXYGENASE"/>
    <property type="match status" value="1"/>
</dbReference>
<dbReference type="Pfam" id="PF01494">
    <property type="entry name" value="FAD_binding_3"/>
    <property type="match status" value="1"/>
</dbReference>
<dbReference type="PRINTS" id="PR00420">
    <property type="entry name" value="RNGMNOXGNASE"/>
</dbReference>
<dbReference type="SUPFAM" id="SSF51905">
    <property type="entry name" value="FAD/NAD(P)-binding domain"/>
    <property type="match status" value="1"/>
</dbReference>
<comment type="function">
    <text evidence="4 7">FAD-dependent monooxygenase; part of the gene cluster that mediates the biosynthesis of the phomopsins, a group of hexapeptide mycotoxins which infects lupins and causes lupinosis disease in livestock (PubMed:34608734). The role of phomE within the phomopsins biosynthesis pathway has still to be determined (Probable). The pathway starts with the processing of the precursor phomA by several endopeptidases including kexin proteases as well as the cluster-specific S41 family peptidase phomP1 and the oligopeptidase phomG to produce 10 identical copies of the hexapeptide Tyr-Val-Ile-Pro-Ile-Asp. After being excised from the precursor peptide, the core peptides are cyclized and modified post-translationally by enzymes encoded within the gene cluster. The timing and order of proteolysis of the phomA precursor and PTMs are still unknown. Two tyrosinase-like enzymes, phomQ1 and phomQ2, catalyze the chlorination and hydroxylation of Tyr, respectively. PhomYb, is proposed to be involved in the construction of the macrocyclic structure. The other 4 ustYa family proteins may be involved in PTMs that generate the unique structure of phomopsin A. PhomYa is required for the hydroxylation of C-beta of Tyr. PhomYc, phomYd, and phomYe are responsible for the biosynthesis of 2,3-dehydroisoleucine (dIle), 2,3-dehydroaspartic acid (dAsp), and 3,4-dehydroproline (dPro), respectively. While dIle formation by phomYc is indispensable for the installation of dAsp by phomYd, the order of the other PTMs have not been elucidated yet. Most of the biosynthetic enzymes likely have broad substrate specificity, and thus, there might be a metabolic grid from a precursor to phomopsin A. The enzyme(s) responsible for the biosynthesis of 3,4-dehydrovaline (dVal) have also not been identified yet. Finally, phomM acts as an S-adenosylmethionine-dependent alpha-N-methyltransferase that catalyzes two successive N-methylation reactions, converting N-desmethyl-phomopsin A to phomopsin A and phomopsin A further to an N,N-dimethylated congener called phomopsin E (Probable).</text>
</comment>
<comment type="cofactor">
    <cofactor evidence="2">
        <name>FAD</name>
        <dbReference type="ChEBI" id="CHEBI:57692"/>
    </cofactor>
</comment>
<comment type="subunit">
    <text evidence="1">Monomer.</text>
</comment>
<comment type="similarity">
    <text evidence="6">Belongs to the paxM FAD-dependent monooxygenase family.</text>
</comment>
<name>PHOE1_DIALO</name>
<gene>
    <name evidence="5" type="primary">phomE</name>
</gene>
<organism>
    <name type="scientific">Diaporthe leptostromiformis</name>
    <name type="common">Lupinosis disease fungus</name>
    <name type="synonym">Phomopsis leptostromiformis</name>
    <dbReference type="NCBI Taxonomy" id="291059"/>
    <lineage>
        <taxon>Eukaryota</taxon>
        <taxon>Fungi</taxon>
        <taxon>Dikarya</taxon>
        <taxon>Ascomycota</taxon>
        <taxon>Pezizomycotina</taxon>
        <taxon>Sordariomycetes</taxon>
        <taxon>Sordariomycetidae</taxon>
        <taxon>Diaporthales</taxon>
        <taxon>Diaporthaceae</taxon>
        <taxon>Diaporthe</taxon>
    </lineage>
</organism>
<keyword id="KW-0274">FAD</keyword>
<keyword id="KW-0285">Flavoprotein</keyword>
<keyword id="KW-0503">Monooxygenase</keyword>
<keyword id="KW-0560">Oxidoreductase</keyword>
<keyword id="KW-0843">Virulence</keyword>
<accession>A0A8K1Y6D8</accession>
<evidence type="ECO:0000250" key="1">
    <source>
        <dbReference type="UniProtKB" id="A0A146I0C4"/>
    </source>
</evidence>
<evidence type="ECO:0000250" key="2">
    <source>
        <dbReference type="UniProtKB" id="A6T923"/>
    </source>
</evidence>
<evidence type="ECO:0000250" key="3">
    <source>
        <dbReference type="UniProtKB" id="B8M9J8"/>
    </source>
</evidence>
<evidence type="ECO:0000269" key="4">
    <source>
    </source>
</evidence>
<evidence type="ECO:0000303" key="5">
    <source>
    </source>
</evidence>
<evidence type="ECO:0000305" key="6"/>
<evidence type="ECO:0000305" key="7">
    <source>
    </source>
</evidence>